<protein>
    <recommendedName>
        <fullName evidence="1">Riboflavin biosynthesis protein RibBA</fullName>
    </recommendedName>
    <domain>
        <recommendedName>
            <fullName evidence="1">3,4-dihydroxy-2-butanone 4-phosphate synthase</fullName>
            <shortName evidence="1">DHBP synthase</shortName>
            <ecNumber evidence="1">4.1.99.12</ecNumber>
        </recommendedName>
    </domain>
    <domain>
        <recommendedName>
            <fullName evidence="1">GTP cyclohydrolase-2</fullName>
            <ecNumber evidence="1">3.5.4.25</ecNumber>
        </recommendedName>
        <alternativeName>
            <fullName evidence="1">GTP cyclohydrolase II</fullName>
        </alternativeName>
    </domain>
</protein>
<evidence type="ECO:0000255" key="1">
    <source>
        <dbReference type="HAMAP-Rule" id="MF_01283"/>
    </source>
</evidence>
<reference key="1">
    <citation type="journal article" date="2005" name="Proc. Natl. Acad. Sci. U.S.A.">
        <title>The complete genome sequence of Mycobacterium avium subspecies paratuberculosis.</title>
        <authorList>
            <person name="Li L."/>
            <person name="Bannantine J.P."/>
            <person name="Zhang Q."/>
            <person name="Amonsin A."/>
            <person name="May B.J."/>
            <person name="Alt D."/>
            <person name="Banerji N."/>
            <person name="Kanjilal S."/>
            <person name="Kapur V."/>
        </authorList>
    </citation>
    <scope>NUCLEOTIDE SEQUENCE [LARGE SCALE GENOMIC DNA]</scope>
    <source>
        <strain>ATCC BAA-968 / K-10</strain>
    </source>
</reference>
<accession>Q741F1</accession>
<sequence length="425" mass="46281">MTRLDSVERAVADIAAGKAVIVIDDEDRENEGDLIFAAEKATPEMVAFMVRYTSGYLCVPLDGAICDRLGLLPMYAVNQDKHGTAYTVTVDARNGVGTGISASDRATTMRLLADPTSIAEDFTRPGHVVPLRAKDGGVLRRPGHTEAAVDLARMAGLQPAGAICEIVSQKDEGSMAQTDELRVFADEHDLAMITIADLIEWRRKHEKHIERIAEARIPTRHGEFRAIGYTSIYEEVEHVALVRGEIAGPNSDGDDVLVRVHSECLTGDVFGSRRCDCGPQLDAAMAMVAREGRGIVLYMRGHEGRGIGLMHKLQAYQLQDAGEDTVDANLKLGLPADARDYGIGAQILVDLGVRSMRLLTNNPAKRVGLDGYGLHIIERVPLPVRTNAENIRYLMTKRDKMGHDLAGLDDFHESVHLPGEFGGAL</sequence>
<feature type="chain" id="PRO_1000067425" description="Riboflavin biosynthesis protein RibBA">
    <location>
        <begin position="1"/>
        <end position="425"/>
    </location>
</feature>
<feature type="region of interest" description="DHBP synthase">
    <location>
        <begin position="1"/>
        <end position="204"/>
    </location>
</feature>
<feature type="region of interest" description="GTP cyclohydrolase II">
    <location>
        <begin position="205"/>
        <end position="425"/>
    </location>
</feature>
<feature type="active site" description="Proton acceptor; for GTP cyclohydrolase activity" evidence="1">
    <location>
        <position position="337"/>
    </location>
</feature>
<feature type="active site" description="Nucleophile; for GTP cyclohydrolase activity" evidence="1">
    <location>
        <position position="339"/>
    </location>
</feature>
<feature type="binding site" evidence="1">
    <location>
        <begin position="28"/>
        <end position="29"/>
    </location>
    <ligand>
        <name>D-ribulose 5-phosphate</name>
        <dbReference type="ChEBI" id="CHEBI:58121"/>
    </ligand>
</feature>
<feature type="binding site" evidence="1">
    <location>
        <position position="29"/>
    </location>
    <ligand>
        <name>Mg(2+)</name>
        <dbReference type="ChEBI" id="CHEBI:18420"/>
        <label>1</label>
    </ligand>
</feature>
<feature type="binding site" evidence="1">
    <location>
        <position position="29"/>
    </location>
    <ligand>
        <name>Mg(2+)</name>
        <dbReference type="ChEBI" id="CHEBI:18420"/>
        <label>2</label>
    </ligand>
</feature>
<feature type="binding site" evidence="1">
    <location>
        <position position="33"/>
    </location>
    <ligand>
        <name>D-ribulose 5-phosphate</name>
        <dbReference type="ChEBI" id="CHEBI:58121"/>
    </ligand>
</feature>
<feature type="binding site" evidence="1">
    <location>
        <begin position="141"/>
        <end position="145"/>
    </location>
    <ligand>
        <name>D-ribulose 5-phosphate</name>
        <dbReference type="ChEBI" id="CHEBI:58121"/>
    </ligand>
</feature>
<feature type="binding site" evidence="1">
    <location>
        <position position="144"/>
    </location>
    <ligand>
        <name>Mg(2+)</name>
        <dbReference type="ChEBI" id="CHEBI:18420"/>
        <label>2</label>
    </ligand>
</feature>
<feature type="binding site" evidence="1">
    <location>
        <position position="165"/>
    </location>
    <ligand>
        <name>D-ribulose 5-phosphate</name>
        <dbReference type="ChEBI" id="CHEBI:58121"/>
    </ligand>
</feature>
<feature type="binding site" evidence="1">
    <location>
        <begin position="259"/>
        <end position="263"/>
    </location>
    <ligand>
        <name>GTP</name>
        <dbReference type="ChEBI" id="CHEBI:37565"/>
    </ligand>
</feature>
<feature type="binding site" evidence="1">
    <location>
        <position position="264"/>
    </location>
    <ligand>
        <name>Zn(2+)</name>
        <dbReference type="ChEBI" id="CHEBI:29105"/>
        <note>catalytic</note>
    </ligand>
</feature>
<feature type="binding site" evidence="1">
    <location>
        <position position="275"/>
    </location>
    <ligand>
        <name>Zn(2+)</name>
        <dbReference type="ChEBI" id="CHEBI:29105"/>
        <note>catalytic</note>
    </ligand>
</feature>
<feature type="binding site" evidence="1">
    <location>
        <position position="277"/>
    </location>
    <ligand>
        <name>Zn(2+)</name>
        <dbReference type="ChEBI" id="CHEBI:29105"/>
        <note>catalytic</note>
    </ligand>
</feature>
<feature type="binding site" evidence="1">
    <location>
        <position position="280"/>
    </location>
    <ligand>
        <name>GTP</name>
        <dbReference type="ChEBI" id="CHEBI:37565"/>
    </ligand>
</feature>
<feature type="binding site" evidence="1">
    <location>
        <begin position="303"/>
        <end position="305"/>
    </location>
    <ligand>
        <name>GTP</name>
        <dbReference type="ChEBI" id="CHEBI:37565"/>
    </ligand>
</feature>
<feature type="binding site" evidence="1">
    <location>
        <position position="325"/>
    </location>
    <ligand>
        <name>GTP</name>
        <dbReference type="ChEBI" id="CHEBI:37565"/>
    </ligand>
</feature>
<feature type="binding site" evidence="1">
    <location>
        <position position="360"/>
    </location>
    <ligand>
        <name>GTP</name>
        <dbReference type="ChEBI" id="CHEBI:37565"/>
    </ligand>
</feature>
<feature type="binding site" evidence="1">
    <location>
        <position position="365"/>
    </location>
    <ligand>
        <name>GTP</name>
        <dbReference type="ChEBI" id="CHEBI:37565"/>
    </ligand>
</feature>
<feature type="site" description="Essential for DHBP synthase activity" evidence="1">
    <location>
        <position position="127"/>
    </location>
</feature>
<feature type="site" description="Essential for DHBP synthase activity" evidence="1">
    <location>
        <position position="165"/>
    </location>
</feature>
<gene>
    <name evidence="1" type="primary">ribBA</name>
    <name type="ordered locus">MAP_1140</name>
</gene>
<comment type="function">
    <text evidence="1">Catalyzes the conversion of D-ribulose 5-phosphate to formate and 3,4-dihydroxy-2-butanone 4-phosphate.</text>
</comment>
<comment type="function">
    <text evidence="1">Catalyzes the conversion of GTP to 2,5-diamino-6-ribosylamino-4(3H)-pyrimidinone 5'-phosphate (DARP), formate and pyrophosphate.</text>
</comment>
<comment type="catalytic activity">
    <reaction evidence="1">
        <text>D-ribulose 5-phosphate = (2S)-2-hydroxy-3-oxobutyl phosphate + formate + H(+)</text>
        <dbReference type="Rhea" id="RHEA:18457"/>
        <dbReference type="ChEBI" id="CHEBI:15378"/>
        <dbReference type="ChEBI" id="CHEBI:15740"/>
        <dbReference type="ChEBI" id="CHEBI:58121"/>
        <dbReference type="ChEBI" id="CHEBI:58830"/>
        <dbReference type="EC" id="4.1.99.12"/>
    </reaction>
</comment>
<comment type="catalytic activity">
    <reaction evidence="1">
        <text>GTP + 4 H2O = 2,5-diamino-6-hydroxy-4-(5-phosphoribosylamino)-pyrimidine + formate + 2 phosphate + 3 H(+)</text>
        <dbReference type="Rhea" id="RHEA:23704"/>
        <dbReference type="ChEBI" id="CHEBI:15377"/>
        <dbReference type="ChEBI" id="CHEBI:15378"/>
        <dbReference type="ChEBI" id="CHEBI:15740"/>
        <dbReference type="ChEBI" id="CHEBI:37565"/>
        <dbReference type="ChEBI" id="CHEBI:43474"/>
        <dbReference type="ChEBI" id="CHEBI:58614"/>
        <dbReference type="EC" id="3.5.4.25"/>
    </reaction>
</comment>
<comment type="cofactor">
    <cofactor evidence="1">
        <name>Mg(2+)</name>
        <dbReference type="ChEBI" id="CHEBI:18420"/>
    </cofactor>
    <cofactor evidence="1">
        <name>Mn(2+)</name>
        <dbReference type="ChEBI" id="CHEBI:29035"/>
    </cofactor>
    <text evidence="1">Binds 2 divalent metal cations per subunit. Magnesium or manganese.</text>
</comment>
<comment type="cofactor">
    <cofactor evidence="1">
        <name>Zn(2+)</name>
        <dbReference type="ChEBI" id="CHEBI:29105"/>
    </cofactor>
    <text evidence="1">Binds 1 zinc ion per subunit.</text>
</comment>
<comment type="pathway">
    <text evidence="1">Cofactor biosynthesis; riboflavin biosynthesis; 2-hydroxy-3-oxobutyl phosphate from D-ribulose 5-phosphate: step 1/1.</text>
</comment>
<comment type="pathway">
    <text evidence="1">Cofactor biosynthesis; riboflavin biosynthesis; 5-amino-6-(D-ribitylamino)uracil from GTP: step 1/4.</text>
</comment>
<comment type="similarity">
    <text evidence="1">In the N-terminal section; belongs to the DHBP synthase family.</text>
</comment>
<comment type="similarity">
    <text evidence="1">In the C-terminal section; belongs to the GTP cyclohydrolase II family.</text>
</comment>
<keyword id="KW-0342">GTP-binding</keyword>
<keyword id="KW-0378">Hydrolase</keyword>
<keyword id="KW-0456">Lyase</keyword>
<keyword id="KW-0460">Magnesium</keyword>
<keyword id="KW-0464">Manganese</keyword>
<keyword id="KW-0479">Metal-binding</keyword>
<keyword id="KW-0511">Multifunctional enzyme</keyword>
<keyword id="KW-0547">Nucleotide-binding</keyword>
<keyword id="KW-1185">Reference proteome</keyword>
<keyword id="KW-0686">Riboflavin biosynthesis</keyword>
<keyword id="KW-0862">Zinc</keyword>
<proteinExistence type="inferred from homology"/>
<organism>
    <name type="scientific">Mycolicibacterium paratuberculosis (strain ATCC BAA-968 / K-10)</name>
    <name type="common">Mycobacterium paratuberculosis</name>
    <dbReference type="NCBI Taxonomy" id="262316"/>
    <lineage>
        <taxon>Bacteria</taxon>
        <taxon>Bacillati</taxon>
        <taxon>Actinomycetota</taxon>
        <taxon>Actinomycetes</taxon>
        <taxon>Mycobacteriales</taxon>
        <taxon>Mycobacteriaceae</taxon>
        <taxon>Mycobacterium</taxon>
        <taxon>Mycobacterium avium complex (MAC)</taxon>
    </lineage>
</organism>
<dbReference type="EC" id="4.1.99.12" evidence="1"/>
<dbReference type="EC" id="3.5.4.25" evidence="1"/>
<dbReference type="EMBL" id="AE016958">
    <property type="protein sequence ID" value="AAS03457.1"/>
    <property type="molecule type" value="Genomic_DNA"/>
</dbReference>
<dbReference type="RefSeq" id="WP_003877629.1">
    <property type="nucleotide sequence ID" value="NZ_CP106873.1"/>
</dbReference>
<dbReference type="SMR" id="Q741F1"/>
<dbReference type="STRING" id="262316.MAP_1140"/>
<dbReference type="KEGG" id="mpa:MAP_1140"/>
<dbReference type="PATRIC" id="fig|262316.17.peg.1199"/>
<dbReference type="eggNOG" id="COG0108">
    <property type="taxonomic scope" value="Bacteria"/>
</dbReference>
<dbReference type="eggNOG" id="COG0807">
    <property type="taxonomic scope" value="Bacteria"/>
</dbReference>
<dbReference type="HOGENOM" id="CLU_020273_1_2_11"/>
<dbReference type="UniPathway" id="UPA00275">
    <property type="reaction ID" value="UER00399"/>
</dbReference>
<dbReference type="UniPathway" id="UPA00275">
    <property type="reaction ID" value="UER00400"/>
</dbReference>
<dbReference type="Proteomes" id="UP000000580">
    <property type="component" value="Chromosome"/>
</dbReference>
<dbReference type="GO" id="GO:0005829">
    <property type="term" value="C:cytosol"/>
    <property type="evidence" value="ECO:0007669"/>
    <property type="project" value="TreeGrafter"/>
</dbReference>
<dbReference type="GO" id="GO:0008686">
    <property type="term" value="F:3,4-dihydroxy-2-butanone-4-phosphate synthase activity"/>
    <property type="evidence" value="ECO:0007669"/>
    <property type="project" value="UniProtKB-UniRule"/>
</dbReference>
<dbReference type="GO" id="GO:0005525">
    <property type="term" value="F:GTP binding"/>
    <property type="evidence" value="ECO:0007669"/>
    <property type="project" value="UniProtKB-KW"/>
</dbReference>
<dbReference type="GO" id="GO:0003935">
    <property type="term" value="F:GTP cyclohydrolase II activity"/>
    <property type="evidence" value="ECO:0007669"/>
    <property type="project" value="UniProtKB-UniRule"/>
</dbReference>
<dbReference type="GO" id="GO:0000287">
    <property type="term" value="F:magnesium ion binding"/>
    <property type="evidence" value="ECO:0007669"/>
    <property type="project" value="UniProtKB-UniRule"/>
</dbReference>
<dbReference type="GO" id="GO:0030145">
    <property type="term" value="F:manganese ion binding"/>
    <property type="evidence" value="ECO:0007669"/>
    <property type="project" value="UniProtKB-UniRule"/>
</dbReference>
<dbReference type="GO" id="GO:0008270">
    <property type="term" value="F:zinc ion binding"/>
    <property type="evidence" value="ECO:0007669"/>
    <property type="project" value="UniProtKB-UniRule"/>
</dbReference>
<dbReference type="GO" id="GO:0009231">
    <property type="term" value="P:riboflavin biosynthetic process"/>
    <property type="evidence" value="ECO:0007669"/>
    <property type="project" value="UniProtKB-UniRule"/>
</dbReference>
<dbReference type="CDD" id="cd00641">
    <property type="entry name" value="GTP_cyclohydro2"/>
    <property type="match status" value="1"/>
</dbReference>
<dbReference type="FunFam" id="3.40.50.10990:FF:000001">
    <property type="entry name" value="Riboflavin biosynthesis protein RibBA"/>
    <property type="match status" value="1"/>
</dbReference>
<dbReference type="FunFam" id="3.90.870.10:FF:000001">
    <property type="entry name" value="Riboflavin biosynthesis protein RibBA"/>
    <property type="match status" value="1"/>
</dbReference>
<dbReference type="Gene3D" id="3.90.870.10">
    <property type="entry name" value="DHBP synthase"/>
    <property type="match status" value="1"/>
</dbReference>
<dbReference type="Gene3D" id="3.40.50.10990">
    <property type="entry name" value="GTP cyclohydrolase II"/>
    <property type="match status" value="1"/>
</dbReference>
<dbReference type="HAMAP" id="MF_00179">
    <property type="entry name" value="RibA"/>
    <property type="match status" value="1"/>
</dbReference>
<dbReference type="HAMAP" id="MF_00180">
    <property type="entry name" value="RibB"/>
    <property type="match status" value="1"/>
</dbReference>
<dbReference type="HAMAP" id="MF_01283">
    <property type="entry name" value="RibBA"/>
    <property type="match status" value="1"/>
</dbReference>
<dbReference type="InterPro" id="IPR017945">
    <property type="entry name" value="DHBP_synth_RibB-like_a/b_dom"/>
</dbReference>
<dbReference type="InterPro" id="IPR000422">
    <property type="entry name" value="DHBP_synthase_RibB"/>
</dbReference>
<dbReference type="InterPro" id="IPR032677">
    <property type="entry name" value="GTP_cyclohydro_II"/>
</dbReference>
<dbReference type="InterPro" id="IPR000926">
    <property type="entry name" value="RibA"/>
</dbReference>
<dbReference type="InterPro" id="IPR036144">
    <property type="entry name" value="RibA-like_sf"/>
</dbReference>
<dbReference type="InterPro" id="IPR016299">
    <property type="entry name" value="Riboflavin_synth_RibBA"/>
</dbReference>
<dbReference type="NCBIfam" id="NF001591">
    <property type="entry name" value="PRK00393.1"/>
    <property type="match status" value="1"/>
</dbReference>
<dbReference type="NCBIfam" id="NF006803">
    <property type="entry name" value="PRK09311.1"/>
    <property type="match status" value="1"/>
</dbReference>
<dbReference type="NCBIfam" id="TIGR00505">
    <property type="entry name" value="ribA"/>
    <property type="match status" value="1"/>
</dbReference>
<dbReference type="NCBIfam" id="TIGR00506">
    <property type="entry name" value="ribB"/>
    <property type="match status" value="1"/>
</dbReference>
<dbReference type="PANTHER" id="PTHR21327:SF18">
    <property type="entry name" value="3,4-DIHYDROXY-2-BUTANONE 4-PHOSPHATE SYNTHASE"/>
    <property type="match status" value="1"/>
</dbReference>
<dbReference type="PANTHER" id="PTHR21327">
    <property type="entry name" value="GTP CYCLOHYDROLASE II-RELATED"/>
    <property type="match status" value="1"/>
</dbReference>
<dbReference type="Pfam" id="PF00926">
    <property type="entry name" value="DHBP_synthase"/>
    <property type="match status" value="1"/>
</dbReference>
<dbReference type="Pfam" id="PF00925">
    <property type="entry name" value="GTP_cyclohydro2"/>
    <property type="match status" value="1"/>
</dbReference>
<dbReference type="PIRSF" id="PIRSF001259">
    <property type="entry name" value="RibA"/>
    <property type="match status" value="1"/>
</dbReference>
<dbReference type="SUPFAM" id="SSF142695">
    <property type="entry name" value="RibA-like"/>
    <property type="match status" value="1"/>
</dbReference>
<dbReference type="SUPFAM" id="SSF55821">
    <property type="entry name" value="YrdC/RibB"/>
    <property type="match status" value="1"/>
</dbReference>
<name>RIBBA_MYCPA</name>